<evidence type="ECO:0000255" key="1">
    <source>
        <dbReference type="PROSITE-ProRule" id="PRU00388"/>
    </source>
</evidence>
<evidence type="ECO:0000255" key="2">
    <source>
        <dbReference type="PROSITE-ProRule" id="PRU10133"/>
    </source>
</evidence>
<evidence type="ECO:0000256" key="3">
    <source>
        <dbReference type="SAM" id="MobiDB-lite"/>
    </source>
</evidence>
<evidence type="ECO:0000269" key="4">
    <source>
    </source>
</evidence>
<evidence type="ECO:0000269" key="5">
    <source>
    </source>
</evidence>
<evidence type="ECO:0000269" key="6">
    <source>
    </source>
</evidence>
<evidence type="ECO:0000269" key="7">
    <source>
    </source>
</evidence>
<evidence type="ECO:0000269" key="8">
    <source>
    </source>
</evidence>
<evidence type="ECO:0000269" key="9">
    <source>
    </source>
</evidence>
<evidence type="ECO:0000303" key="10">
    <source>
    </source>
</evidence>
<evidence type="ECO:0000305" key="11"/>
<evidence type="ECO:0000312" key="12">
    <source>
        <dbReference type="HGNC" id="HGNC:12477"/>
    </source>
</evidence>
<evidence type="ECO:0007744" key="13">
    <source>
        <dbReference type="PDB" id="3BZH"/>
    </source>
</evidence>
<evidence type="ECO:0007744" key="14">
    <source>
    </source>
</evidence>
<evidence type="ECO:0007744" key="15">
    <source>
    </source>
</evidence>
<evidence type="ECO:0007829" key="16">
    <source>
        <dbReference type="PDB" id="3BZH"/>
    </source>
</evidence>
<evidence type="ECO:0007829" key="17">
    <source>
        <dbReference type="PDB" id="5LBN"/>
    </source>
</evidence>
<reference key="1">
    <citation type="journal article" date="1996" name="J. Biol. Chem.">
        <title>Cloning of human ubiquitin-conjugating enzymes UbcH6 and UbcH7 (E2-F1) and characterization of their interaction with E6-AP and RSP5.</title>
        <authorList>
            <person name="Nuber U."/>
            <person name="Schwarz S."/>
            <person name="Kaiser P."/>
            <person name="Schneider R."/>
            <person name="Scheffner M."/>
        </authorList>
    </citation>
    <scope>NUCLEOTIDE SEQUENCE [MRNA] (ISOFORM 1)</scope>
</reference>
<reference key="2">
    <citation type="journal article" date="2004" name="Nat. Genet.">
        <title>Complete sequencing and characterization of 21,243 full-length human cDNAs.</title>
        <authorList>
            <person name="Ota T."/>
            <person name="Suzuki Y."/>
            <person name="Nishikawa T."/>
            <person name="Otsuki T."/>
            <person name="Sugiyama T."/>
            <person name="Irie R."/>
            <person name="Wakamatsu A."/>
            <person name="Hayashi K."/>
            <person name="Sato H."/>
            <person name="Nagai K."/>
            <person name="Kimura K."/>
            <person name="Makita H."/>
            <person name="Sekine M."/>
            <person name="Obayashi M."/>
            <person name="Nishi T."/>
            <person name="Shibahara T."/>
            <person name="Tanaka T."/>
            <person name="Ishii S."/>
            <person name="Yamamoto J."/>
            <person name="Saito K."/>
            <person name="Kawai Y."/>
            <person name="Isono Y."/>
            <person name="Nakamura Y."/>
            <person name="Nagahari K."/>
            <person name="Murakami K."/>
            <person name="Yasuda T."/>
            <person name="Iwayanagi T."/>
            <person name="Wagatsuma M."/>
            <person name="Shiratori A."/>
            <person name="Sudo H."/>
            <person name="Hosoiri T."/>
            <person name="Kaku Y."/>
            <person name="Kodaira H."/>
            <person name="Kondo H."/>
            <person name="Sugawara M."/>
            <person name="Takahashi M."/>
            <person name="Kanda K."/>
            <person name="Yokoi T."/>
            <person name="Furuya T."/>
            <person name="Kikkawa E."/>
            <person name="Omura Y."/>
            <person name="Abe K."/>
            <person name="Kamihara K."/>
            <person name="Katsuta N."/>
            <person name="Sato K."/>
            <person name="Tanikawa M."/>
            <person name="Yamazaki M."/>
            <person name="Ninomiya K."/>
            <person name="Ishibashi T."/>
            <person name="Yamashita H."/>
            <person name="Murakawa K."/>
            <person name="Fujimori K."/>
            <person name="Tanai H."/>
            <person name="Kimata M."/>
            <person name="Watanabe M."/>
            <person name="Hiraoka S."/>
            <person name="Chiba Y."/>
            <person name="Ishida S."/>
            <person name="Ono Y."/>
            <person name="Takiguchi S."/>
            <person name="Watanabe S."/>
            <person name="Yosida M."/>
            <person name="Hotuta T."/>
            <person name="Kusano J."/>
            <person name="Kanehori K."/>
            <person name="Takahashi-Fujii A."/>
            <person name="Hara H."/>
            <person name="Tanase T.-O."/>
            <person name="Nomura Y."/>
            <person name="Togiya S."/>
            <person name="Komai F."/>
            <person name="Hara R."/>
            <person name="Takeuchi K."/>
            <person name="Arita M."/>
            <person name="Imose N."/>
            <person name="Musashino K."/>
            <person name="Yuuki H."/>
            <person name="Oshima A."/>
            <person name="Sasaki N."/>
            <person name="Aotsuka S."/>
            <person name="Yoshikawa Y."/>
            <person name="Matsunawa H."/>
            <person name="Ichihara T."/>
            <person name="Shiohata N."/>
            <person name="Sano S."/>
            <person name="Moriya S."/>
            <person name="Momiyama H."/>
            <person name="Satoh N."/>
            <person name="Takami S."/>
            <person name="Terashima Y."/>
            <person name="Suzuki O."/>
            <person name="Nakagawa S."/>
            <person name="Senoh A."/>
            <person name="Mizoguchi H."/>
            <person name="Goto Y."/>
            <person name="Shimizu F."/>
            <person name="Wakebe H."/>
            <person name="Hishigaki H."/>
            <person name="Watanabe T."/>
            <person name="Sugiyama A."/>
            <person name="Takemoto M."/>
            <person name="Kawakami B."/>
            <person name="Yamazaki M."/>
            <person name="Watanabe K."/>
            <person name="Kumagai A."/>
            <person name="Itakura S."/>
            <person name="Fukuzumi Y."/>
            <person name="Fujimori Y."/>
            <person name="Komiyama M."/>
            <person name="Tashiro H."/>
            <person name="Tanigami A."/>
            <person name="Fujiwara T."/>
            <person name="Ono T."/>
            <person name="Yamada K."/>
            <person name="Fujii Y."/>
            <person name="Ozaki K."/>
            <person name="Hirao M."/>
            <person name="Ohmori Y."/>
            <person name="Kawabata A."/>
            <person name="Hikiji T."/>
            <person name="Kobatake N."/>
            <person name="Inagaki H."/>
            <person name="Ikema Y."/>
            <person name="Okamoto S."/>
            <person name="Okitani R."/>
            <person name="Kawakami T."/>
            <person name="Noguchi S."/>
            <person name="Itoh T."/>
            <person name="Shigeta K."/>
            <person name="Senba T."/>
            <person name="Matsumura K."/>
            <person name="Nakajima Y."/>
            <person name="Mizuno T."/>
            <person name="Morinaga M."/>
            <person name="Sasaki M."/>
            <person name="Togashi T."/>
            <person name="Oyama M."/>
            <person name="Hata H."/>
            <person name="Watanabe M."/>
            <person name="Komatsu T."/>
            <person name="Mizushima-Sugano J."/>
            <person name="Satoh T."/>
            <person name="Shirai Y."/>
            <person name="Takahashi Y."/>
            <person name="Nakagawa K."/>
            <person name="Okumura K."/>
            <person name="Nagase T."/>
            <person name="Nomura N."/>
            <person name="Kikuchi H."/>
            <person name="Masuho Y."/>
            <person name="Yamashita R."/>
            <person name="Nakai K."/>
            <person name="Yada T."/>
            <person name="Nakamura Y."/>
            <person name="Ohara O."/>
            <person name="Isogai T."/>
            <person name="Sugano S."/>
        </authorList>
    </citation>
    <scope>NUCLEOTIDE SEQUENCE [LARGE SCALE MRNA] (ISOFORM 1)</scope>
    <source>
        <tissue>Amygdala</tissue>
    </source>
</reference>
<reference key="3">
    <citation type="journal article" date="2006" name="Nature">
        <title>The DNA sequence, annotation and analysis of human chromosome 3.</title>
        <authorList>
            <person name="Muzny D.M."/>
            <person name="Scherer S.E."/>
            <person name="Kaul R."/>
            <person name="Wang J."/>
            <person name="Yu J."/>
            <person name="Sudbrak R."/>
            <person name="Buhay C.J."/>
            <person name="Chen R."/>
            <person name="Cree A."/>
            <person name="Ding Y."/>
            <person name="Dugan-Rocha S."/>
            <person name="Gill R."/>
            <person name="Gunaratne P."/>
            <person name="Harris R.A."/>
            <person name="Hawes A.C."/>
            <person name="Hernandez J."/>
            <person name="Hodgson A.V."/>
            <person name="Hume J."/>
            <person name="Jackson A."/>
            <person name="Khan Z.M."/>
            <person name="Kovar-Smith C."/>
            <person name="Lewis L.R."/>
            <person name="Lozado R.J."/>
            <person name="Metzker M.L."/>
            <person name="Milosavljevic A."/>
            <person name="Miner G.R."/>
            <person name="Morgan M.B."/>
            <person name="Nazareth L.V."/>
            <person name="Scott G."/>
            <person name="Sodergren E."/>
            <person name="Song X.-Z."/>
            <person name="Steffen D."/>
            <person name="Wei S."/>
            <person name="Wheeler D.A."/>
            <person name="Wright M.W."/>
            <person name="Worley K.C."/>
            <person name="Yuan Y."/>
            <person name="Zhang Z."/>
            <person name="Adams C.Q."/>
            <person name="Ansari-Lari M.A."/>
            <person name="Ayele M."/>
            <person name="Brown M.J."/>
            <person name="Chen G."/>
            <person name="Chen Z."/>
            <person name="Clendenning J."/>
            <person name="Clerc-Blankenburg K.P."/>
            <person name="Chen R."/>
            <person name="Chen Z."/>
            <person name="Davis C."/>
            <person name="Delgado O."/>
            <person name="Dinh H.H."/>
            <person name="Dong W."/>
            <person name="Draper H."/>
            <person name="Ernst S."/>
            <person name="Fu G."/>
            <person name="Gonzalez-Garay M.L."/>
            <person name="Garcia D.K."/>
            <person name="Gillett W."/>
            <person name="Gu J."/>
            <person name="Hao B."/>
            <person name="Haugen E."/>
            <person name="Havlak P."/>
            <person name="He X."/>
            <person name="Hennig S."/>
            <person name="Hu S."/>
            <person name="Huang W."/>
            <person name="Jackson L.R."/>
            <person name="Jacob L.S."/>
            <person name="Kelly S.H."/>
            <person name="Kube M."/>
            <person name="Levy R."/>
            <person name="Li Z."/>
            <person name="Liu B."/>
            <person name="Liu J."/>
            <person name="Liu W."/>
            <person name="Lu J."/>
            <person name="Maheshwari M."/>
            <person name="Nguyen B.-V."/>
            <person name="Okwuonu G.O."/>
            <person name="Palmeiri A."/>
            <person name="Pasternak S."/>
            <person name="Perez L.M."/>
            <person name="Phelps K.A."/>
            <person name="Plopper F.J."/>
            <person name="Qiang B."/>
            <person name="Raymond C."/>
            <person name="Rodriguez R."/>
            <person name="Saenphimmachak C."/>
            <person name="Santibanez J."/>
            <person name="Shen H."/>
            <person name="Shen Y."/>
            <person name="Subramanian S."/>
            <person name="Tabor P.E."/>
            <person name="Verduzco D."/>
            <person name="Waldron L."/>
            <person name="Wang J."/>
            <person name="Wang J."/>
            <person name="Wang Q."/>
            <person name="Williams G.A."/>
            <person name="Wong G.K.-S."/>
            <person name="Yao Z."/>
            <person name="Zhang J."/>
            <person name="Zhang X."/>
            <person name="Zhao G."/>
            <person name="Zhou J."/>
            <person name="Zhou Y."/>
            <person name="Nelson D."/>
            <person name="Lehrach H."/>
            <person name="Reinhardt R."/>
            <person name="Naylor S.L."/>
            <person name="Yang H."/>
            <person name="Olson M."/>
            <person name="Weinstock G."/>
            <person name="Gibbs R.A."/>
        </authorList>
    </citation>
    <scope>NUCLEOTIDE SEQUENCE [LARGE SCALE GENOMIC DNA]</scope>
</reference>
<reference key="4">
    <citation type="submission" date="2005-07" db="EMBL/GenBank/DDBJ databases">
        <authorList>
            <person name="Mural R.J."/>
            <person name="Istrail S."/>
            <person name="Sutton G.G."/>
            <person name="Florea L."/>
            <person name="Halpern A.L."/>
            <person name="Mobarry C.M."/>
            <person name="Lippert R."/>
            <person name="Walenz B."/>
            <person name="Shatkay H."/>
            <person name="Dew I."/>
            <person name="Miller J.R."/>
            <person name="Flanigan M.J."/>
            <person name="Edwards N.J."/>
            <person name="Bolanos R."/>
            <person name="Fasulo D."/>
            <person name="Halldorsson B.V."/>
            <person name="Hannenhalli S."/>
            <person name="Turner R."/>
            <person name="Yooseph S."/>
            <person name="Lu F."/>
            <person name="Nusskern D.R."/>
            <person name="Shue B.C."/>
            <person name="Zheng X.H."/>
            <person name="Zhong F."/>
            <person name="Delcher A.L."/>
            <person name="Huson D.H."/>
            <person name="Kravitz S.A."/>
            <person name="Mouchard L."/>
            <person name="Reinert K."/>
            <person name="Remington K.A."/>
            <person name="Clark A.G."/>
            <person name="Waterman M.S."/>
            <person name="Eichler E.E."/>
            <person name="Adams M.D."/>
            <person name="Hunkapiller M.W."/>
            <person name="Myers E.W."/>
            <person name="Venter J.C."/>
        </authorList>
    </citation>
    <scope>NUCLEOTIDE SEQUENCE [LARGE SCALE GENOMIC DNA]</scope>
</reference>
<reference key="5">
    <citation type="journal article" date="2004" name="Genome Res.">
        <title>The status, quality, and expansion of the NIH full-length cDNA project: the Mammalian Gene Collection (MGC).</title>
        <authorList>
            <consortium name="The MGC Project Team"/>
        </authorList>
    </citation>
    <scope>NUCLEOTIDE SEQUENCE [LARGE SCALE MRNA] (ISOFORMS 1; 2 AND 3)</scope>
    <source>
        <tissue>Cervix carcinoma</tissue>
        <tissue>Colon</tissue>
        <tissue>Hypothalamus</tissue>
    </source>
</reference>
<reference key="6">
    <citation type="journal article" date="2005" name="J. Biochem.">
        <title>Link between the ubiquitin conjugation system and the ISG15 conjugation system: ISG15 conjugation to the UbcH6 ubiquitin E2 enzyme.</title>
        <authorList>
            <person name="Takeuchi T."/>
            <person name="Iwahara S."/>
            <person name="Saeki Y."/>
            <person name="Sasajima H."/>
            <person name="Yokosawa H."/>
        </authorList>
    </citation>
    <scope>FUNCTION</scope>
    <scope>ISGYLATION AT LYS-136</scope>
</reference>
<reference key="7">
    <citation type="journal article" date="2007" name="Mol. Cell">
        <title>E3-independent monoubiquitination of ubiquitin-binding proteins.</title>
        <authorList>
            <person name="Hoeller D."/>
            <person name="Hecker C.M."/>
            <person name="Wagner S."/>
            <person name="Rogov V."/>
            <person name="Doetsch V."/>
            <person name="Dikic I."/>
        </authorList>
    </citation>
    <scope>CATALYTIC ACTIVITY AS E3-INDEPENDENT E2 UBIQUITIN-CONJUGATING ENZYME</scope>
</reference>
<reference key="8">
    <citation type="journal article" date="2008" name="Exp. Cell Res.">
        <title>The autoantigen Ro52 is an E3 ligase resident in the cytoplasm but enters the nucleus upon cellular exposure to nitric oxide.</title>
        <authorList>
            <person name="Espinosa A."/>
            <person name="Oke V."/>
            <person name="Elfving A."/>
            <person name="Nyberg F."/>
            <person name="Covacu R."/>
            <person name="Wahren-Herlenius M."/>
        </authorList>
    </citation>
    <scope>SUBCELLULAR LOCATION</scope>
</reference>
<reference key="9">
    <citation type="journal article" date="2009" name="Anal. Chem.">
        <title>Lys-N and trypsin cover complementary parts of the phosphoproteome in a refined SCX-based approach.</title>
        <authorList>
            <person name="Gauci S."/>
            <person name="Helbig A.O."/>
            <person name="Slijper M."/>
            <person name="Krijgsveld J."/>
            <person name="Heck A.J."/>
            <person name="Mohammed S."/>
        </authorList>
    </citation>
    <scope>ACETYLATION [LARGE SCALE ANALYSIS] AT SER-2</scope>
    <scope>CLEAVAGE OF INITIATOR METHIONINE [LARGE SCALE ANALYSIS]</scope>
    <scope>IDENTIFICATION BY MASS SPECTROMETRY [LARGE SCALE ANALYSIS]</scope>
</reference>
<reference key="10">
    <citation type="journal article" date="2010" name="J. Biol. Chem.">
        <title>The E2 ubiquitin-conjugating enzymes direct polyubiquitination to preferred lysines.</title>
        <authorList>
            <person name="David Y."/>
            <person name="Ziv T."/>
            <person name="Admon A."/>
            <person name="Navon A."/>
        </authorList>
    </citation>
    <scope>FUNCTION</scope>
    <scope>CATALYTIC ACTIVITY</scope>
</reference>
<reference key="11">
    <citation type="journal article" date="2011" name="BMC Syst. Biol.">
        <title>Initial characterization of the human central proteome.</title>
        <authorList>
            <person name="Burkard T.R."/>
            <person name="Planyavsky M."/>
            <person name="Kaupe I."/>
            <person name="Breitwieser F.P."/>
            <person name="Buerckstuemmer T."/>
            <person name="Bennett K.L."/>
            <person name="Superti-Furga G."/>
            <person name="Colinge J."/>
        </authorList>
    </citation>
    <scope>IDENTIFICATION BY MASS SPECTROMETRY [LARGE SCALE ANALYSIS]</scope>
</reference>
<reference key="12">
    <citation type="journal article" date="2011" name="Sci. Signal.">
        <title>System-wide temporal characterization of the proteome and phosphoproteome of human embryonic stem cell differentiation.</title>
        <authorList>
            <person name="Rigbolt K.T."/>
            <person name="Prokhorova T.A."/>
            <person name="Akimov V."/>
            <person name="Henningsen J."/>
            <person name="Johansen P.T."/>
            <person name="Kratchmarova I."/>
            <person name="Kassem M."/>
            <person name="Mann M."/>
            <person name="Olsen J.V."/>
            <person name="Blagoev B."/>
        </authorList>
    </citation>
    <scope>ACETYLATION [LARGE SCALE ANALYSIS] AT SER-2</scope>
    <scope>CLEAVAGE OF INITIATOR METHIONINE [LARGE SCALE ANALYSIS]</scope>
    <scope>IDENTIFICATION BY MASS SPECTROMETRY [LARGE SCALE ANALYSIS]</scope>
</reference>
<reference key="13">
    <citation type="journal article" date="2016" name="Mol. Cell">
        <title>E3-Independent Constitutive Monoubiquitination Complements Histone Methyltransferase Activity of SETDB1.</title>
        <authorList>
            <person name="Sun L."/>
            <person name="Fang J."/>
        </authorList>
    </citation>
    <scope>FUNCTION</scope>
    <scope>MUTAGENESIS OF PHE-108 AND CYS-131</scope>
</reference>
<reference evidence="13" key="14">
    <citation type="journal article" date="2012" name="Mol. Cell. Proteomics">
        <title>A human ubiquitin conjugating enzyme (E2)-HECT E3 ligase structure-function screen.</title>
        <authorList>
            <person name="Sheng Y."/>
            <person name="Hong J.H."/>
            <person name="Doherty R."/>
            <person name="Srikumar T."/>
            <person name="Shloush J."/>
            <person name="Avvakumov G.V."/>
            <person name="Walker J.R."/>
            <person name="Xue S."/>
            <person name="Neculai D."/>
            <person name="Wan J.W."/>
            <person name="Kim S.K."/>
            <person name="Arrowsmith C.H."/>
            <person name="Raught B."/>
            <person name="Dhe-Paganon S."/>
        </authorList>
    </citation>
    <scope>X-RAY CRYSTALLOGRAPHY (1.60 ANGSTROMS)</scope>
    <scope>AUTOUBIQUITINATION</scope>
</reference>
<proteinExistence type="evidence at protein level"/>
<keyword id="KW-0002">3D-structure</keyword>
<keyword id="KW-0007">Acetylation</keyword>
<keyword id="KW-0025">Alternative splicing</keyword>
<keyword id="KW-0067">ATP-binding</keyword>
<keyword id="KW-1017">Isopeptide bond</keyword>
<keyword id="KW-0547">Nucleotide-binding</keyword>
<keyword id="KW-0539">Nucleus</keyword>
<keyword id="KW-1267">Proteomics identification</keyword>
<keyword id="KW-1185">Reference proteome</keyword>
<keyword id="KW-0808">Transferase</keyword>
<keyword id="KW-0832">Ubl conjugation</keyword>
<keyword id="KW-0833">Ubl conjugation pathway</keyword>
<accession>P51965</accession>
<accession>B2RBX4</accession>
<accession>C9J8K2</accession>
<accession>K4DI90</accession>
<dbReference type="EC" id="2.3.2.23" evidence="7"/>
<dbReference type="EC" id="2.3.2.24" evidence="5"/>
<dbReference type="EMBL" id="X92963">
    <property type="protein sequence ID" value="CAA63539.1"/>
    <property type="molecule type" value="mRNA"/>
</dbReference>
<dbReference type="EMBL" id="AK314854">
    <property type="protein sequence ID" value="BAG37371.1"/>
    <property type="molecule type" value="mRNA"/>
</dbReference>
<dbReference type="EMBL" id="AC020626">
    <property type="status" value="NOT_ANNOTATED_CDS"/>
    <property type="molecule type" value="Genomic_DNA"/>
</dbReference>
<dbReference type="EMBL" id="AC124914">
    <property type="status" value="NOT_ANNOTATED_CDS"/>
    <property type="molecule type" value="Genomic_DNA"/>
</dbReference>
<dbReference type="EMBL" id="CH471055">
    <property type="protein sequence ID" value="EAW64329.1"/>
    <property type="molecule type" value="Genomic_DNA"/>
</dbReference>
<dbReference type="EMBL" id="CH471055">
    <property type="protein sequence ID" value="EAW64331.1"/>
    <property type="molecule type" value="Genomic_DNA"/>
</dbReference>
<dbReference type="EMBL" id="CH471055">
    <property type="protein sequence ID" value="EAW64332.1"/>
    <property type="molecule type" value="Genomic_DNA"/>
</dbReference>
<dbReference type="EMBL" id="BC009139">
    <property type="protein sequence ID" value="AAH09139.1"/>
    <property type="molecule type" value="mRNA"/>
</dbReference>
<dbReference type="EMBL" id="BI223271">
    <property type="status" value="NOT_ANNOTATED_CDS"/>
    <property type="molecule type" value="mRNA"/>
</dbReference>
<dbReference type="EMBL" id="BI666638">
    <property type="status" value="NOT_ANNOTATED_CDS"/>
    <property type="molecule type" value="mRNA"/>
</dbReference>
<dbReference type="CCDS" id="CCDS2638.1">
    <molecule id="P51965-1"/>
</dbReference>
<dbReference type="CCDS" id="CCDS2639.1">
    <molecule id="P51965-3"/>
</dbReference>
<dbReference type="CCDS" id="CCDS56244.1">
    <molecule id="P51965-2"/>
</dbReference>
<dbReference type="RefSeq" id="NP_001189405.1">
    <molecule id="P51965-2"/>
    <property type="nucleotide sequence ID" value="NM_001202476.2"/>
</dbReference>
<dbReference type="RefSeq" id="NP_003332.1">
    <molecule id="P51965-1"/>
    <property type="nucleotide sequence ID" value="NM_003341.5"/>
</dbReference>
<dbReference type="RefSeq" id="NP_872607.1">
    <molecule id="P51965-3"/>
    <property type="nucleotide sequence ID" value="NM_182666.3"/>
</dbReference>
<dbReference type="PDB" id="1XR9">
    <property type="method" value="X-ray"/>
    <property type="resolution" value="1.79 A"/>
    <property type="chains" value="C=83-91"/>
</dbReference>
<dbReference type="PDB" id="3BZH">
    <property type="method" value="X-ray"/>
    <property type="resolution" value="1.60 A"/>
    <property type="chains" value="A=1-193"/>
</dbReference>
<dbReference type="PDB" id="4JJQ">
    <property type="method" value="X-ray"/>
    <property type="resolution" value="1.95 A"/>
    <property type="chains" value="B=5-14"/>
</dbReference>
<dbReference type="PDB" id="5LBN">
    <property type="method" value="X-ray"/>
    <property type="resolution" value="1.42 A"/>
    <property type="chains" value="A=37-193"/>
</dbReference>
<dbReference type="PDB" id="6FGA">
    <property type="method" value="X-ray"/>
    <property type="resolution" value="2.82 A"/>
    <property type="chains" value="I/J/K/L/M/N/O=37-193"/>
</dbReference>
<dbReference type="PDB" id="8IYA">
    <property type="method" value="X-ray"/>
    <property type="resolution" value="2.43 A"/>
    <property type="chains" value="A/B/C=41-193"/>
</dbReference>
<dbReference type="PDBsum" id="1XR9"/>
<dbReference type="PDBsum" id="3BZH"/>
<dbReference type="PDBsum" id="4JJQ"/>
<dbReference type="PDBsum" id="5LBN"/>
<dbReference type="PDBsum" id="6FGA"/>
<dbReference type="PDBsum" id="8IYA"/>
<dbReference type="SMR" id="P51965"/>
<dbReference type="BioGRID" id="113172">
    <property type="interactions" value="180"/>
</dbReference>
<dbReference type="CORUM" id="P51965"/>
<dbReference type="FunCoup" id="P51965">
    <property type="interactions" value="3470"/>
</dbReference>
<dbReference type="IntAct" id="P51965">
    <property type="interactions" value="84"/>
</dbReference>
<dbReference type="MINT" id="P51965"/>
<dbReference type="STRING" id="9606.ENSP00000303709"/>
<dbReference type="BindingDB" id="P51965"/>
<dbReference type="ChEMBL" id="CHEMBL4105876"/>
<dbReference type="MoonDB" id="P51965">
    <property type="type" value="Predicted"/>
</dbReference>
<dbReference type="iPTMnet" id="P51965"/>
<dbReference type="PhosphoSitePlus" id="P51965"/>
<dbReference type="SwissPalm" id="P51965"/>
<dbReference type="BioMuta" id="UBE2E1"/>
<dbReference type="DMDM" id="1717857"/>
<dbReference type="jPOST" id="P51965"/>
<dbReference type="MassIVE" id="P51965"/>
<dbReference type="PaxDb" id="9606-ENSP00000303709"/>
<dbReference type="PeptideAtlas" id="P51965"/>
<dbReference type="ProteomicsDB" id="56463">
    <molecule id="P51965-1"/>
</dbReference>
<dbReference type="ProteomicsDB" id="9057"/>
<dbReference type="Pumba" id="P51965"/>
<dbReference type="Antibodypedia" id="45210">
    <property type="antibodies" value="115 antibodies from 23 providers"/>
</dbReference>
<dbReference type="CPTC" id="P51965">
    <property type="antibodies" value="3 antibodies"/>
</dbReference>
<dbReference type="DNASU" id="7324"/>
<dbReference type="Ensembl" id="ENST00000306627.8">
    <molecule id="P51965-1"/>
    <property type="protein sequence ID" value="ENSP00000303709.3"/>
    <property type="gene ID" value="ENSG00000170142.12"/>
</dbReference>
<dbReference type="Ensembl" id="ENST00000346855.7">
    <molecule id="P51965-3"/>
    <property type="protein sequence ID" value="ENSP00000329113.4"/>
    <property type="gene ID" value="ENSG00000170142.12"/>
</dbReference>
<dbReference type="Ensembl" id="ENST00000424381.5">
    <molecule id="P51965-2"/>
    <property type="protein sequence ID" value="ENSP00000411351.1"/>
    <property type="gene ID" value="ENSG00000170142.12"/>
</dbReference>
<dbReference type="GeneID" id="7324"/>
<dbReference type="KEGG" id="hsa:7324"/>
<dbReference type="MANE-Select" id="ENST00000306627.8">
    <property type="protein sequence ID" value="ENSP00000303709.3"/>
    <property type="RefSeq nucleotide sequence ID" value="NM_003341.5"/>
    <property type="RefSeq protein sequence ID" value="NP_003332.1"/>
</dbReference>
<dbReference type="UCSC" id="uc003cch.4">
    <molecule id="P51965-1"/>
    <property type="organism name" value="human"/>
</dbReference>
<dbReference type="AGR" id="HGNC:12477"/>
<dbReference type="CTD" id="7324"/>
<dbReference type="DisGeNET" id="7324"/>
<dbReference type="GeneCards" id="UBE2E1"/>
<dbReference type="HGNC" id="HGNC:12477">
    <property type="gene designation" value="UBE2E1"/>
</dbReference>
<dbReference type="HPA" id="ENSG00000170142">
    <property type="expression patterns" value="Low tissue specificity"/>
</dbReference>
<dbReference type="MIM" id="602916">
    <property type="type" value="gene"/>
</dbReference>
<dbReference type="neXtProt" id="NX_P51965"/>
<dbReference type="OpenTargets" id="ENSG00000170142"/>
<dbReference type="PharmGKB" id="PA37127"/>
<dbReference type="VEuPathDB" id="HostDB:ENSG00000170142"/>
<dbReference type="eggNOG" id="KOG0417">
    <property type="taxonomic scope" value="Eukaryota"/>
</dbReference>
<dbReference type="GeneTree" id="ENSGT00940000156415"/>
<dbReference type="HOGENOM" id="CLU_030988_14_4_1"/>
<dbReference type="InParanoid" id="P51965"/>
<dbReference type="OMA" id="DDYPFKA"/>
<dbReference type="OrthoDB" id="9480840at2759"/>
<dbReference type="PAN-GO" id="P51965">
    <property type="GO annotations" value="6 GO annotations based on evolutionary models"/>
</dbReference>
<dbReference type="PhylomeDB" id="P51965"/>
<dbReference type="TreeFam" id="TF101117"/>
<dbReference type="BRENDA" id="2.3.2.23">
    <property type="organism ID" value="2681"/>
</dbReference>
<dbReference type="BRENDA" id="2.3.2.24">
    <property type="organism ID" value="2681"/>
</dbReference>
<dbReference type="BRENDA" id="2.3.2.25">
    <property type="organism ID" value="2681"/>
</dbReference>
<dbReference type="PathwayCommons" id="P51965"/>
<dbReference type="Reactome" id="R-HSA-1169408">
    <property type="pathway name" value="ISG15 antiviral mechanism"/>
</dbReference>
<dbReference type="Reactome" id="R-HSA-141430">
    <property type="pathway name" value="Inactivation of APC/C via direct inhibition of the APC/C complex"/>
</dbReference>
<dbReference type="Reactome" id="R-HSA-174048">
    <property type="pathway name" value="APC/C:Cdc20 mediated degradation of Cyclin B"/>
</dbReference>
<dbReference type="Reactome" id="R-HSA-174084">
    <property type="pathway name" value="Autodegradation of Cdh1 by Cdh1:APC/C"/>
</dbReference>
<dbReference type="Reactome" id="R-HSA-174154">
    <property type="pathway name" value="APC/C:Cdc20 mediated degradation of Securin"/>
</dbReference>
<dbReference type="Reactome" id="R-HSA-174178">
    <property type="pathway name" value="APC/C:Cdh1 mediated degradation of Cdc20 and other APC/C:Cdh1 targeted proteins in late mitosis/early G1"/>
</dbReference>
<dbReference type="Reactome" id="R-HSA-174184">
    <property type="pathway name" value="Cdc20:Phospho-APC/C mediated degradation of Cyclin A"/>
</dbReference>
<dbReference type="Reactome" id="R-HSA-176407">
    <property type="pathway name" value="Conversion from APC/C:Cdc20 to APC/C:Cdh1 in late anaphase"/>
</dbReference>
<dbReference type="Reactome" id="R-HSA-176408">
    <property type="pathway name" value="Regulation of APC/C activators between G1/S and early anaphase"/>
</dbReference>
<dbReference type="Reactome" id="R-HSA-176409">
    <property type="pathway name" value="APC/C:Cdc20 mediated degradation of mitotic proteins"/>
</dbReference>
<dbReference type="Reactome" id="R-HSA-176412">
    <property type="pathway name" value="Phosphorylation of the APC/C"/>
</dbReference>
<dbReference type="Reactome" id="R-HSA-179409">
    <property type="pathway name" value="APC-Cdc20 mediated degradation of Nek2A"/>
</dbReference>
<dbReference type="Reactome" id="R-HSA-2467813">
    <property type="pathway name" value="Separation of Sister Chromatids"/>
</dbReference>
<dbReference type="Reactome" id="R-HSA-2559582">
    <property type="pathway name" value="Senescence-Associated Secretory Phenotype (SASP)"/>
</dbReference>
<dbReference type="Reactome" id="R-HSA-68867">
    <property type="pathway name" value="Assembly of the pre-replicative complex"/>
</dbReference>
<dbReference type="Reactome" id="R-HSA-69017">
    <property type="pathway name" value="CDK-mediated phosphorylation and removal of Cdc6"/>
</dbReference>
<dbReference type="Reactome" id="R-HSA-8853884">
    <property type="pathway name" value="Transcriptional Regulation by VENTX"/>
</dbReference>
<dbReference type="Reactome" id="R-HSA-8866652">
    <property type="pathway name" value="Synthesis of active ubiquitin: roles of E1 and E2 enzymes"/>
</dbReference>
<dbReference type="Reactome" id="R-HSA-8866654">
    <property type="pathway name" value="E3 ubiquitin ligases ubiquitinate target proteins"/>
</dbReference>
<dbReference type="Reactome" id="R-HSA-9687136">
    <property type="pathway name" value="Aberrant regulation of mitotic exit in cancer due to RB1 defects"/>
</dbReference>
<dbReference type="Reactome" id="R-HSA-983168">
    <property type="pathway name" value="Antigen processing: Ubiquitination &amp; Proteasome degradation"/>
</dbReference>
<dbReference type="SignaLink" id="P51965"/>
<dbReference type="SIGNOR" id="P51965"/>
<dbReference type="UniPathway" id="UPA00143"/>
<dbReference type="BioGRID-ORCS" id="7324">
    <property type="hits" value="20 hits in 1170 CRISPR screens"/>
</dbReference>
<dbReference type="ChiTaRS" id="UBE2E1">
    <property type="organism name" value="human"/>
</dbReference>
<dbReference type="EvolutionaryTrace" id="P51965"/>
<dbReference type="GeneWiki" id="UBE2E1"/>
<dbReference type="GenomeRNAi" id="7324"/>
<dbReference type="Pharos" id="P51965">
    <property type="development level" value="Tbio"/>
</dbReference>
<dbReference type="PRO" id="PR:P51965"/>
<dbReference type="Proteomes" id="UP000005640">
    <property type="component" value="Chromosome 3"/>
</dbReference>
<dbReference type="RNAct" id="P51965">
    <property type="molecule type" value="protein"/>
</dbReference>
<dbReference type="Bgee" id="ENSG00000170142">
    <property type="expression patterns" value="Expressed in cartilage tissue and 216 other cell types or tissues"/>
</dbReference>
<dbReference type="ExpressionAtlas" id="P51965">
    <property type="expression patterns" value="baseline and differential"/>
</dbReference>
<dbReference type="GO" id="GO:0005829">
    <property type="term" value="C:cytosol"/>
    <property type="evidence" value="ECO:0000304"/>
    <property type="project" value="Reactome"/>
</dbReference>
<dbReference type="GO" id="GO:0005654">
    <property type="term" value="C:nucleoplasm"/>
    <property type="evidence" value="ECO:0000304"/>
    <property type="project" value="Reactome"/>
</dbReference>
<dbReference type="GO" id="GO:0005634">
    <property type="term" value="C:nucleus"/>
    <property type="evidence" value="ECO:0000314"/>
    <property type="project" value="UniProtKB"/>
</dbReference>
<dbReference type="GO" id="GO:0000151">
    <property type="term" value="C:ubiquitin ligase complex"/>
    <property type="evidence" value="ECO:0000314"/>
    <property type="project" value="UniProtKB"/>
</dbReference>
<dbReference type="GO" id="GO:0005524">
    <property type="term" value="F:ATP binding"/>
    <property type="evidence" value="ECO:0007669"/>
    <property type="project" value="UniProtKB-KW"/>
</dbReference>
<dbReference type="GO" id="GO:0042296">
    <property type="term" value="F:ISG15 transferase activity"/>
    <property type="evidence" value="ECO:0000314"/>
    <property type="project" value="HGNC-UCL"/>
</dbReference>
<dbReference type="GO" id="GO:0061631">
    <property type="term" value="F:ubiquitin conjugating enzyme activity"/>
    <property type="evidence" value="ECO:0000314"/>
    <property type="project" value="BHF-UCL"/>
</dbReference>
<dbReference type="GO" id="GO:0004842">
    <property type="term" value="F:ubiquitin-protein transferase activity"/>
    <property type="evidence" value="ECO:0000314"/>
    <property type="project" value="UniProtKB"/>
</dbReference>
<dbReference type="GO" id="GO:0032020">
    <property type="term" value="P:ISG15-protein conjugation"/>
    <property type="evidence" value="ECO:0000314"/>
    <property type="project" value="HGNC-UCL"/>
</dbReference>
<dbReference type="GO" id="GO:0045944">
    <property type="term" value="P:positive regulation of transcription by RNA polymerase II"/>
    <property type="evidence" value="ECO:0000314"/>
    <property type="project" value="UniProtKB"/>
</dbReference>
<dbReference type="GO" id="GO:0070936">
    <property type="term" value="P:protein K48-linked ubiquitination"/>
    <property type="evidence" value="ECO:0000314"/>
    <property type="project" value="UniProtKB"/>
</dbReference>
<dbReference type="GO" id="GO:0006513">
    <property type="term" value="P:protein monoubiquitination"/>
    <property type="evidence" value="ECO:0000314"/>
    <property type="project" value="UniProt"/>
</dbReference>
<dbReference type="GO" id="GO:0000209">
    <property type="term" value="P:protein polyubiquitination"/>
    <property type="evidence" value="ECO:0000314"/>
    <property type="project" value="UniProtKB"/>
</dbReference>
<dbReference type="GO" id="GO:0016567">
    <property type="term" value="P:protein ubiquitination"/>
    <property type="evidence" value="ECO:0000314"/>
    <property type="project" value="BHF-UCL"/>
</dbReference>
<dbReference type="GO" id="GO:0006511">
    <property type="term" value="P:ubiquitin-dependent protein catabolic process"/>
    <property type="evidence" value="ECO:0000304"/>
    <property type="project" value="ProtInc"/>
</dbReference>
<dbReference type="CDD" id="cd23793">
    <property type="entry name" value="UBCc_UBE2E"/>
    <property type="match status" value="1"/>
</dbReference>
<dbReference type="DisProt" id="DP02191"/>
<dbReference type="FunFam" id="3.10.110.10:FF:000003">
    <property type="entry name" value="Ubiquitin-conjugating enzyme E2 E3"/>
    <property type="match status" value="1"/>
</dbReference>
<dbReference type="Gene3D" id="3.10.110.10">
    <property type="entry name" value="Ubiquitin Conjugating Enzyme"/>
    <property type="match status" value="1"/>
</dbReference>
<dbReference type="IDEAL" id="IID00633"/>
<dbReference type="InterPro" id="IPR000608">
    <property type="entry name" value="UBQ-conjugat_E2_core"/>
</dbReference>
<dbReference type="InterPro" id="IPR023313">
    <property type="entry name" value="UBQ-conjugating_AS"/>
</dbReference>
<dbReference type="InterPro" id="IPR016135">
    <property type="entry name" value="UBQ-conjugating_enzyme/RWD"/>
</dbReference>
<dbReference type="PANTHER" id="PTHR24068">
    <property type="entry name" value="UBIQUITIN-CONJUGATING ENZYME E2"/>
    <property type="match status" value="1"/>
</dbReference>
<dbReference type="Pfam" id="PF00179">
    <property type="entry name" value="UQ_con"/>
    <property type="match status" value="1"/>
</dbReference>
<dbReference type="SMART" id="SM00212">
    <property type="entry name" value="UBCc"/>
    <property type="match status" value="1"/>
</dbReference>
<dbReference type="SUPFAM" id="SSF54495">
    <property type="entry name" value="UBC-like"/>
    <property type="match status" value="1"/>
</dbReference>
<dbReference type="PROSITE" id="PS00183">
    <property type="entry name" value="UBC_1"/>
    <property type="match status" value="1"/>
</dbReference>
<dbReference type="PROSITE" id="PS50127">
    <property type="entry name" value="UBC_2"/>
    <property type="match status" value="1"/>
</dbReference>
<feature type="initiator methionine" description="Removed" evidence="14 15">
    <location>
        <position position="1"/>
    </location>
</feature>
<feature type="chain" id="PRO_0000082470" description="Ubiquitin-conjugating enzyme E2 E1">
    <location>
        <begin position="2"/>
        <end position="193"/>
    </location>
</feature>
<feature type="domain" description="UBC core" evidence="1">
    <location>
        <begin position="47"/>
        <end position="193"/>
    </location>
</feature>
<feature type="region of interest" description="Disordered" evidence="3">
    <location>
        <begin position="1"/>
        <end position="45"/>
    </location>
</feature>
<feature type="compositionally biased region" description="Low complexity" evidence="3">
    <location>
        <begin position="8"/>
        <end position="18"/>
    </location>
</feature>
<feature type="compositionally biased region" description="Basic and acidic residues" evidence="3">
    <location>
        <begin position="22"/>
        <end position="35"/>
    </location>
</feature>
<feature type="compositionally biased region" description="Polar residues" evidence="3">
    <location>
        <begin position="36"/>
        <end position="45"/>
    </location>
</feature>
<feature type="active site" description="Glycyl thioester intermediate" evidence="1 2">
    <location>
        <position position="131"/>
    </location>
</feature>
<feature type="modified residue" description="N-acetylserine" evidence="14 15">
    <location>
        <position position="2"/>
    </location>
</feature>
<feature type="cross-link" description="Glycyl lysine isopeptide (Lys-Gly) (interchain with G-Cter in ISG15)">
    <location>
        <position position="136"/>
    </location>
</feature>
<feature type="splice variant" id="VSP_045884" description="In isoform 2." evidence="10">
    <original>MSDDDSRASTSSSSSSSSNQQTEKETNTPKKKESKVSMSKNSKLLSTSAK</original>
    <variation>MKEVGRPREVRGRPGKS</variation>
    <location>
        <begin position="1"/>
        <end position="50"/>
    </location>
</feature>
<feature type="splice variant" id="VSP_047200" description="In isoform 3." evidence="10">
    <location>
        <begin position="51"/>
        <end position="67"/>
    </location>
</feature>
<feature type="sequence variant" id="VAR_061868" description="In dbSNP:rs36060625.">
    <original>E</original>
    <variation>D</variation>
    <location>
        <position position="25"/>
    </location>
</feature>
<feature type="mutagenesis site" description="Inhibits TDP43 ubiquitination. No effect on SETDB1 ubiquitination." evidence="9">
    <original>F</original>
    <variation>N</variation>
    <location>
        <position position="108"/>
    </location>
</feature>
<feature type="mutagenesis site" description="Loss of catalytic activity." evidence="9">
    <original>C</original>
    <variation>A</variation>
    <variation>S</variation>
    <location>
        <position position="131"/>
    </location>
</feature>
<feature type="sequence conflict" description="In Ref. 5; BI223271." evidence="11" ref="5">
    <original>C</original>
    <variation>R</variation>
    <location>
        <position position="131"/>
    </location>
</feature>
<feature type="helix" evidence="16">
    <location>
        <begin position="22"/>
        <end position="24"/>
    </location>
</feature>
<feature type="helix" evidence="17">
    <location>
        <begin position="42"/>
        <end position="44"/>
    </location>
</feature>
<feature type="helix" evidence="17">
    <location>
        <begin position="47"/>
        <end position="61"/>
    </location>
</feature>
<feature type="strand" evidence="17">
    <location>
        <begin position="67"/>
        <end position="74"/>
    </location>
</feature>
<feature type="strand" evidence="17">
    <location>
        <begin position="78"/>
        <end position="84"/>
    </location>
</feature>
<feature type="turn" evidence="17">
    <location>
        <begin position="90"/>
        <end position="93"/>
    </location>
</feature>
<feature type="strand" evidence="17">
    <location>
        <begin position="95"/>
        <end position="101"/>
    </location>
</feature>
<feature type="turn" evidence="17">
    <location>
        <begin position="104"/>
        <end position="107"/>
    </location>
</feature>
<feature type="strand" evidence="17">
    <location>
        <begin position="112"/>
        <end position="117"/>
    </location>
</feature>
<feature type="helix" evidence="17">
    <location>
        <begin position="133"/>
        <end position="135"/>
    </location>
</feature>
<feature type="turn" evidence="16">
    <location>
        <begin position="136"/>
        <end position="138"/>
    </location>
</feature>
<feature type="helix" evidence="17">
    <location>
        <begin position="145"/>
        <end position="157"/>
    </location>
</feature>
<feature type="helix" evidence="17">
    <location>
        <begin position="167"/>
        <end position="175"/>
    </location>
</feature>
<feature type="helix" evidence="17">
    <location>
        <begin position="177"/>
        <end position="191"/>
    </location>
</feature>
<sequence length="193" mass="21404">MSDDDSRASTSSSSSSSSNQQTEKETNTPKKKESKVSMSKNSKLLSTSAKRIQKELADITLDPPPNCSAGPKGDNIYEWRSTILGPPGSVYEGGVFFLDITFTPEYPFKPPKVTFRTRIYHCNINSQGVICLDILKDNWSPALTISKVLLSICSLLTDCNPADPLVGSIATQYMTNRAEHDRMARQWTKRYAT</sequence>
<gene>
    <name evidence="12" type="primary">UBE2E1</name>
    <name type="synonym">UBCH6</name>
</gene>
<comment type="function">
    <text evidence="4 7 9">Accepts ubiquitin from the E1 complex and catalyzes its covalent attachment to other proteins. Catalyzes the covalent attachment of ISG15 to other proteins. Mediates the selective degradation of short-lived and abnormal proteins. In vitro also catalyzes 'Lys-48'-linked polyubiquitination. Catalyzes monoubiquitination of other proteins in both an E3-dependent and E3-independent manner (PubMed:27237050).</text>
</comment>
<comment type="catalytic activity">
    <reaction evidence="1 2 7">
        <text>S-ubiquitinyl-[E1 ubiquitin-activating enzyme]-L-cysteine + [E2 ubiquitin-conjugating enzyme]-L-cysteine = [E1 ubiquitin-activating enzyme]-L-cysteine + S-ubiquitinyl-[E2 ubiquitin-conjugating enzyme]-L-cysteine.</text>
        <dbReference type="EC" id="2.3.2.23"/>
    </reaction>
</comment>
<comment type="catalytic activity">
    <reaction evidence="5">
        <text>S-ubiquitinyl-[E1 ubiquitin-activating enzyme]-L-cysteine + [acceptor protein]-L-lysine = [E1 ubiquitin-activating enzyme]-L-cysteine + N(6)-monoubiquitinyl-[acceptor protein]-L-lysine.</text>
        <dbReference type="EC" id="2.3.2.24"/>
    </reaction>
</comment>
<comment type="pathway">
    <text evidence="1">Protein modification; protein ubiquitination.</text>
</comment>
<comment type="subunit">
    <text>Interacts with RNF14.</text>
</comment>
<comment type="interaction">
    <interactant intactId="EBI-348546">
        <id>P51965</id>
    </interactant>
    <interactant intactId="EBI-1058491">
        <id>Q96FW1</id>
        <label>OTUB1</label>
    </interactant>
    <organismsDiffer>false</organismsDiffer>
    <experiments>4</experiments>
</comment>
<comment type="interaction">
    <interactant intactId="EBI-348546">
        <id>P51965</id>
    </interactant>
    <interactant intactId="EBI-2607770">
        <id>Q8N7H5</id>
        <label>PAF1</label>
    </interactant>
    <organismsDiffer>false</organismsDiffer>
    <experiments>2</experiments>
</comment>
<comment type="interaction">
    <interactant intactId="EBI-348546">
        <id>P51965</id>
    </interactant>
    <interactant intactId="EBI-396669">
        <id>Q9Y3C5</id>
        <label>RNF11</label>
    </interactant>
    <organismsDiffer>false</organismsDiffer>
    <experiments>2</experiments>
</comment>
<comment type="interaction">
    <interactant intactId="EBI-348546">
        <id>P51965</id>
    </interactant>
    <interactant intactId="EBI-2372238">
        <id>Q5VTR2</id>
        <label>RNF20</label>
    </interactant>
    <organismsDiffer>false</organismsDiffer>
    <experiments>2</experiments>
</comment>
<comment type="interaction">
    <interactant intactId="EBI-348546">
        <id>P51965</id>
    </interactant>
    <interactant intactId="EBI-2129220">
        <id>Q96BH1</id>
        <label>RNF25</label>
    </interactant>
    <organismsDiffer>false</organismsDiffer>
    <experiments>6</experiments>
</comment>
<comment type="interaction">
    <interactant intactId="EBI-348546">
        <id>P51965</id>
    </interactant>
    <interactant intactId="EBI-2129250">
        <id>Q8ND25</id>
        <label>ZNRF1</label>
    </interactant>
    <organismsDiffer>false</organismsDiffer>
    <experiments>3</experiments>
</comment>
<comment type="interaction">
    <interactant intactId="EBI-348546">
        <id>P51965</id>
    </interactant>
    <interactant intactId="EBI-9316527">
        <id>Q99PZ6</id>
        <label>ospG</label>
    </interactant>
    <organismsDiffer>true</organismsDiffer>
    <experiments>3</experiments>
</comment>
<comment type="subcellular location">
    <subcellularLocation>
        <location evidence="6">Nucleus</location>
    </subcellularLocation>
</comment>
<comment type="alternative products">
    <event type="alternative splicing"/>
    <isoform>
        <id>P51965-1</id>
        <name>1</name>
        <sequence type="displayed"/>
    </isoform>
    <isoform>
        <id>P51965-2</id>
        <name>2</name>
        <sequence type="described" ref="VSP_045884"/>
    </isoform>
    <isoform>
        <id>P51965-3</id>
        <name>3</name>
        <sequence type="described" ref="VSP_047200"/>
    </isoform>
</comment>
<comment type="PTM">
    <text evidence="4">ISGylation suppresses ubiquitin E2 enzyme activity.</text>
</comment>
<comment type="PTM">
    <text evidence="8">Autoubiquitinated in vitro.</text>
</comment>
<comment type="similarity">
    <text evidence="1">Belongs to the ubiquitin-conjugating enzyme family.</text>
</comment>
<protein>
    <recommendedName>
        <fullName>Ubiquitin-conjugating enzyme E2 E1</fullName>
        <ecNumber evidence="7">2.3.2.23</ecNumber>
    </recommendedName>
    <alternativeName>
        <fullName>(E3-independent) E2 ubiquitin-conjugating enzyme E1</fullName>
        <ecNumber evidence="5">2.3.2.24</ecNumber>
    </alternativeName>
    <alternativeName>
        <fullName>E2 ubiquitin-conjugating enzyme E1</fullName>
    </alternativeName>
    <alternativeName>
        <fullName>UbcH6</fullName>
    </alternativeName>
    <alternativeName>
        <fullName>Ubiquitin carrier protein E1</fullName>
    </alternativeName>
    <alternativeName>
        <fullName>Ubiquitin-protein ligase E1</fullName>
    </alternativeName>
</protein>
<organism>
    <name type="scientific">Homo sapiens</name>
    <name type="common">Human</name>
    <dbReference type="NCBI Taxonomy" id="9606"/>
    <lineage>
        <taxon>Eukaryota</taxon>
        <taxon>Metazoa</taxon>
        <taxon>Chordata</taxon>
        <taxon>Craniata</taxon>
        <taxon>Vertebrata</taxon>
        <taxon>Euteleostomi</taxon>
        <taxon>Mammalia</taxon>
        <taxon>Eutheria</taxon>
        <taxon>Euarchontoglires</taxon>
        <taxon>Primates</taxon>
        <taxon>Haplorrhini</taxon>
        <taxon>Catarrhini</taxon>
        <taxon>Hominidae</taxon>
        <taxon>Homo</taxon>
    </lineage>
</organism>
<name>UB2E1_HUMAN</name>